<dbReference type="EMBL" id="CP001279">
    <property type="protein sequence ID" value="ACM93735.1"/>
    <property type="molecule type" value="Genomic_DNA"/>
</dbReference>
<dbReference type="RefSeq" id="WP_015902787.1">
    <property type="nucleotide sequence ID" value="NC_012115.1"/>
</dbReference>
<dbReference type="SMR" id="B9L6M6"/>
<dbReference type="STRING" id="598659.NAMH_1634"/>
<dbReference type="KEGG" id="nam:NAMH_1634"/>
<dbReference type="eggNOG" id="COG0197">
    <property type="taxonomic scope" value="Bacteria"/>
</dbReference>
<dbReference type="HOGENOM" id="CLU_078858_2_1_7"/>
<dbReference type="OrthoDB" id="9802589at2"/>
<dbReference type="Proteomes" id="UP000000448">
    <property type="component" value="Chromosome"/>
</dbReference>
<dbReference type="GO" id="GO:0022625">
    <property type="term" value="C:cytosolic large ribosomal subunit"/>
    <property type="evidence" value="ECO:0007669"/>
    <property type="project" value="TreeGrafter"/>
</dbReference>
<dbReference type="GO" id="GO:0019843">
    <property type="term" value="F:rRNA binding"/>
    <property type="evidence" value="ECO:0007669"/>
    <property type="project" value="UniProtKB-UniRule"/>
</dbReference>
<dbReference type="GO" id="GO:0003735">
    <property type="term" value="F:structural constituent of ribosome"/>
    <property type="evidence" value="ECO:0007669"/>
    <property type="project" value="InterPro"/>
</dbReference>
<dbReference type="GO" id="GO:0000049">
    <property type="term" value="F:tRNA binding"/>
    <property type="evidence" value="ECO:0007669"/>
    <property type="project" value="UniProtKB-KW"/>
</dbReference>
<dbReference type="GO" id="GO:0006412">
    <property type="term" value="P:translation"/>
    <property type="evidence" value="ECO:0007669"/>
    <property type="project" value="UniProtKB-UniRule"/>
</dbReference>
<dbReference type="CDD" id="cd01433">
    <property type="entry name" value="Ribosomal_L16_L10e"/>
    <property type="match status" value="1"/>
</dbReference>
<dbReference type="FunFam" id="3.90.1170.10:FF:000001">
    <property type="entry name" value="50S ribosomal protein L16"/>
    <property type="match status" value="1"/>
</dbReference>
<dbReference type="Gene3D" id="3.90.1170.10">
    <property type="entry name" value="Ribosomal protein L10e/L16"/>
    <property type="match status" value="1"/>
</dbReference>
<dbReference type="HAMAP" id="MF_01342">
    <property type="entry name" value="Ribosomal_uL16"/>
    <property type="match status" value="1"/>
</dbReference>
<dbReference type="InterPro" id="IPR047873">
    <property type="entry name" value="Ribosomal_uL16"/>
</dbReference>
<dbReference type="InterPro" id="IPR000114">
    <property type="entry name" value="Ribosomal_uL16_bact-type"/>
</dbReference>
<dbReference type="InterPro" id="IPR020798">
    <property type="entry name" value="Ribosomal_uL16_CS"/>
</dbReference>
<dbReference type="InterPro" id="IPR016180">
    <property type="entry name" value="Ribosomal_uL16_dom"/>
</dbReference>
<dbReference type="InterPro" id="IPR036920">
    <property type="entry name" value="Ribosomal_uL16_sf"/>
</dbReference>
<dbReference type="NCBIfam" id="TIGR01164">
    <property type="entry name" value="rplP_bact"/>
    <property type="match status" value="1"/>
</dbReference>
<dbReference type="PANTHER" id="PTHR12220">
    <property type="entry name" value="50S/60S RIBOSOMAL PROTEIN L16"/>
    <property type="match status" value="1"/>
</dbReference>
<dbReference type="PANTHER" id="PTHR12220:SF13">
    <property type="entry name" value="LARGE RIBOSOMAL SUBUNIT PROTEIN UL16M"/>
    <property type="match status" value="1"/>
</dbReference>
<dbReference type="Pfam" id="PF00252">
    <property type="entry name" value="Ribosomal_L16"/>
    <property type="match status" value="1"/>
</dbReference>
<dbReference type="PRINTS" id="PR00060">
    <property type="entry name" value="RIBOSOMALL16"/>
</dbReference>
<dbReference type="SUPFAM" id="SSF54686">
    <property type="entry name" value="Ribosomal protein L16p/L10e"/>
    <property type="match status" value="1"/>
</dbReference>
<dbReference type="PROSITE" id="PS00586">
    <property type="entry name" value="RIBOSOMAL_L16_1"/>
    <property type="match status" value="1"/>
</dbReference>
<dbReference type="PROSITE" id="PS00701">
    <property type="entry name" value="RIBOSOMAL_L16_2"/>
    <property type="match status" value="1"/>
</dbReference>
<sequence>MLMPKRTKYRKQQKGRNRGKAYRGSTLAFGTYGLKAVELGRINSRQIEAGRVALSRTMKRTGKIWIRVFPDKPLTAKPVGVRMGKGKGSVEEWVMNIKPGRIIFEITGVNNETAVRALTLAAAKLPFKTKIVSMESENELY</sequence>
<name>RL16_NAUPA</name>
<feature type="chain" id="PRO_1000166371" description="Large ribosomal subunit protein uL16">
    <location>
        <begin position="1"/>
        <end position="141"/>
    </location>
</feature>
<feature type="region of interest" description="Disordered" evidence="2">
    <location>
        <begin position="1"/>
        <end position="20"/>
    </location>
</feature>
<keyword id="KW-0687">Ribonucleoprotein</keyword>
<keyword id="KW-0689">Ribosomal protein</keyword>
<keyword id="KW-0694">RNA-binding</keyword>
<keyword id="KW-0699">rRNA-binding</keyword>
<keyword id="KW-0820">tRNA-binding</keyword>
<protein>
    <recommendedName>
        <fullName evidence="1">Large ribosomal subunit protein uL16</fullName>
    </recommendedName>
    <alternativeName>
        <fullName evidence="3">50S ribosomal protein L16</fullName>
    </alternativeName>
</protein>
<comment type="function">
    <text evidence="1">Binds 23S rRNA and is also seen to make contacts with the A and possibly P site tRNAs.</text>
</comment>
<comment type="subunit">
    <text evidence="1">Part of the 50S ribosomal subunit.</text>
</comment>
<comment type="similarity">
    <text evidence="1">Belongs to the universal ribosomal protein uL16 family.</text>
</comment>
<reference key="1">
    <citation type="journal article" date="2009" name="PLoS Genet.">
        <title>Adaptations to submarine hydrothermal environments exemplified by the genome of Nautilia profundicola.</title>
        <authorList>
            <person name="Campbell B.J."/>
            <person name="Smith J.L."/>
            <person name="Hanson T.E."/>
            <person name="Klotz M.G."/>
            <person name="Stein L.Y."/>
            <person name="Lee C.K."/>
            <person name="Wu D."/>
            <person name="Robinson J.M."/>
            <person name="Khouri H.M."/>
            <person name="Eisen J.A."/>
            <person name="Cary S.C."/>
        </authorList>
    </citation>
    <scope>NUCLEOTIDE SEQUENCE [LARGE SCALE GENOMIC DNA]</scope>
    <source>
        <strain>ATCC BAA-1463 / DSM 18972 / AmH</strain>
    </source>
</reference>
<evidence type="ECO:0000255" key="1">
    <source>
        <dbReference type="HAMAP-Rule" id="MF_01342"/>
    </source>
</evidence>
<evidence type="ECO:0000256" key="2">
    <source>
        <dbReference type="SAM" id="MobiDB-lite"/>
    </source>
</evidence>
<evidence type="ECO:0000305" key="3"/>
<organism>
    <name type="scientific">Nautilia profundicola (strain ATCC BAA-1463 / DSM 18972 / AmH)</name>
    <dbReference type="NCBI Taxonomy" id="598659"/>
    <lineage>
        <taxon>Bacteria</taxon>
        <taxon>Pseudomonadati</taxon>
        <taxon>Campylobacterota</taxon>
        <taxon>Epsilonproteobacteria</taxon>
        <taxon>Nautiliales</taxon>
        <taxon>Nautiliaceae</taxon>
        <taxon>Nautilia</taxon>
    </lineage>
</organism>
<proteinExistence type="inferred from homology"/>
<gene>
    <name evidence="1" type="primary">rplP</name>
    <name type="ordered locus">NAMH_1634</name>
</gene>
<accession>B9L6M6</accession>